<dbReference type="EC" id="3.5.4.13" evidence="1"/>
<dbReference type="EMBL" id="CP000270">
    <property type="protein sequence ID" value="ABE29507.1"/>
    <property type="molecule type" value="Genomic_DNA"/>
</dbReference>
<dbReference type="RefSeq" id="WP_007175915.1">
    <property type="nucleotide sequence ID" value="NZ_CP008760.1"/>
</dbReference>
<dbReference type="SMR" id="Q143I2"/>
<dbReference type="STRING" id="266265.Bxe_A3478"/>
<dbReference type="KEGG" id="bxb:DR64_1180"/>
<dbReference type="KEGG" id="bxe:Bxe_A3478"/>
<dbReference type="eggNOG" id="COG0717">
    <property type="taxonomic scope" value="Bacteria"/>
</dbReference>
<dbReference type="OrthoDB" id="9780956at2"/>
<dbReference type="UniPathway" id="UPA00610">
    <property type="reaction ID" value="UER00665"/>
</dbReference>
<dbReference type="Proteomes" id="UP000001817">
    <property type="component" value="Chromosome 1"/>
</dbReference>
<dbReference type="GO" id="GO:0008829">
    <property type="term" value="F:dCTP deaminase activity"/>
    <property type="evidence" value="ECO:0007669"/>
    <property type="project" value="UniProtKB-UniRule"/>
</dbReference>
<dbReference type="GO" id="GO:0000166">
    <property type="term" value="F:nucleotide binding"/>
    <property type="evidence" value="ECO:0007669"/>
    <property type="project" value="UniProtKB-KW"/>
</dbReference>
<dbReference type="GO" id="GO:0006226">
    <property type="term" value="P:dUMP biosynthetic process"/>
    <property type="evidence" value="ECO:0007669"/>
    <property type="project" value="UniProtKB-UniPathway"/>
</dbReference>
<dbReference type="GO" id="GO:0006229">
    <property type="term" value="P:dUTP biosynthetic process"/>
    <property type="evidence" value="ECO:0007669"/>
    <property type="project" value="UniProtKB-UniRule"/>
</dbReference>
<dbReference type="GO" id="GO:0015949">
    <property type="term" value="P:nucleobase-containing small molecule interconversion"/>
    <property type="evidence" value="ECO:0007669"/>
    <property type="project" value="TreeGrafter"/>
</dbReference>
<dbReference type="CDD" id="cd07557">
    <property type="entry name" value="trimeric_dUTPase"/>
    <property type="match status" value="1"/>
</dbReference>
<dbReference type="FunFam" id="2.70.40.10:FF:000001">
    <property type="entry name" value="dCTP deaminase"/>
    <property type="match status" value="1"/>
</dbReference>
<dbReference type="Gene3D" id="2.70.40.10">
    <property type="match status" value="1"/>
</dbReference>
<dbReference type="HAMAP" id="MF_00146">
    <property type="entry name" value="dCTP_deaminase"/>
    <property type="match status" value="1"/>
</dbReference>
<dbReference type="InterPro" id="IPR011962">
    <property type="entry name" value="dCTP_deaminase"/>
</dbReference>
<dbReference type="InterPro" id="IPR036157">
    <property type="entry name" value="dUTPase-like_sf"/>
</dbReference>
<dbReference type="InterPro" id="IPR033704">
    <property type="entry name" value="dUTPase_trimeric"/>
</dbReference>
<dbReference type="NCBIfam" id="TIGR02274">
    <property type="entry name" value="dCTP_deam"/>
    <property type="match status" value="1"/>
</dbReference>
<dbReference type="PANTHER" id="PTHR42680">
    <property type="entry name" value="DCTP DEAMINASE"/>
    <property type="match status" value="1"/>
</dbReference>
<dbReference type="PANTHER" id="PTHR42680:SF3">
    <property type="entry name" value="DCTP DEAMINASE"/>
    <property type="match status" value="1"/>
</dbReference>
<dbReference type="Pfam" id="PF22769">
    <property type="entry name" value="DCD"/>
    <property type="match status" value="1"/>
</dbReference>
<dbReference type="SUPFAM" id="SSF51283">
    <property type="entry name" value="dUTPase-like"/>
    <property type="match status" value="1"/>
</dbReference>
<evidence type="ECO:0000255" key="1">
    <source>
        <dbReference type="HAMAP-Rule" id="MF_00146"/>
    </source>
</evidence>
<name>DCD_PARXL</name>
<feature type="chain" id="PRO_1000009697" description="dCTP deaminase">
    <location>
        <begin position="1"/>
        <end position="189"/>
    </location>
</feature>
<feature type="active site" description="Proton donor/acceptor" evidence="1">
    <location>
        <position position="138"/>
    </location>
</feature>
<feature type="binding site" evidence="1">
    <location>
        <begin position="112"/>
        <end position="117"/>
    </location>
    <ligand>
        <name>dCTP</name>
        <dbReference type="ChEBI" id="CHEBI:61481"/>
    </ligand>
</feature>
<feature type="binding site" evidence="1">
    <location>
        <begin position="136"/>
        <end position="138"/>
    </location>
    <ligand>
        <name>dCTP</name>
        <dbReference type="ChEBI" id="CHEBI:61481"/>
    </ligand>
</feature>
<feature type="binding site" evidence="1">
    <location>
        <position position="157"/>
    </location>
    <ligand>
        <name>dCTP</name>
        <dbReference type="ChEBI" id="CHEBI:61481"/>
    </ligand>
</feature>
<feature type="binding site" evidence="1">
    <location>
        <position position="171"/>
    </location>
    <ligand>
        <name>dCTP</name>
        <dbReference type="ChEBI" id="CHEBI:61481"/>
    </ligand>
</feature>
<feature type="binding site" evidence="1">
    <location>
        <position position="181"/>
    </location>
    <ligand>
        <name>dCTP</name>
        <dbReference type="ChEBI" id="CHEBI:61481"/>
    </ligand>
</feature>
<reference key="1">
    <citation type="journal article" date="2006" name="Proc. Natl. Acad. Sci. U.S.A.">
        <title>Burkholderia xenovorans LB400 harbors a multi-replicon, 9.73-Mbp genome shaped for versatility.</title>
        <authorList>
            <person name="Chain P.S.G."/>
            <person name="Denef V.J."/>
            <person name="Konstantinidis K.T."/>
            <person name="Vergez L.M."/>
            <person name="Agullo L."/>
            <person name="Reyes V.L."/>
            <person name="Hauser L."/>
            <person name="Cordova M."/>
            <person name="Gomez L."/>
            <person name="Gonzalez M."/>
            <person name="Land M."/>
            <person name="Lao V."/>
            <person name="Larimer F."/>
            <person name="LiPuma J.J."/>
            <person name="Mahenthiralingam E."/>
            <person name="Malfatti S.A."/>
            <person name="Marx C.J."/>
            <person name="Parnell J.J."/>
            <person name="Ramette A."/>
            <person name="Richardson P."/>
            <person name="Seeger M."/>
            <person name="Smith D."/>
            <person name="Spilker T."/>
            <person name="Sul W.J."/>
            <person name="Tsoi T.V."/>
            <person name="Ulrich L.E."/>
            <person name="Zhulin I.B."/>
            <person name="Tiedje J.M."/>
        </authorList>
    </citation>
    <scope>NUCLEOTIDE SEQUENCE [LARGE SCALE GENOMIC DNA]</scope>
    <source>
        <strain>LB400</strain>
    </source>
</reference>
<accession>Q143I2</accession>
<keyword id="KW-0378">Hydrolase</keyword>
<keyword id="KW-0546">Nucleotide metabolism</keyword>
<keyword id="KW-0547">Nucleotide-binding</keyword>
<keyword id="KW-1185">Reference proteome</keyword>
<organism>
    <name type="scientific">Paraburkholderia xenovorans (strain LB400)</name>
    <dbReference type="NCBI Taxonomy" id="266265"/>
    <lineage>
        <taxon>Bacteria</taxon>
        <taxon>Pseudomonadati</taxon>
        <taxon>Pseudomonadota</taxon>
        <taxon>Betaproteobacteria</taxon>
        <taxon>Burkholderiales</taxon>
        <taxon>Burkholderiaceae</taxon>
        <taxon>Paraburkholderia</taxon>
    </lineage>
</organism>
<gene>
    <name evidence="1" type="primary">dcd</name>
    <name type="ordered locus">Bxeno_A0969</name>
    <name type="ORF">Bxe_A3478</name>
</gene>
<comment type="function">
    <text evidence="1">Catalyzes the deamination of dCTP to dUTP.</text>
</comment>
<comment type="catalytic activity">
    <reaction evidence="1">
        <text>dCTP + H2O + H(+) = dUTP + NH4(+)</text>
        <dbReference type="Rhea" id="RHEA:22680"/>
        <dbReference type="ChEBI" id="CHEBI:15377"/>
        <dbReference type="ChEBI" id="CHEBI:15378"/>
        <dbReference type="ChEBI" id="CHEBI:28938"/>
        <dbReference type="ChEBI" id="CHEBI:61481"/>
        <dbReference type="ChEBI" id="CHEBI:61555"/>
        <dbReference type="EC" id="3.5.4.13"/>
    </reaction>
</comment>
<comment type="pathway">
    <text evidence="1">Pyrimidine metabolism; dUMP biosynthesis; dUMP from dCTP (dUTP route): step 1/2.</text>
</comment>
<comment type="subunit">
    <text evidence="1">Homotrimer.</text>
</comment>
<comment type="similarity">
    <text evidence="1">Belongs to the dCTP deaminase family.</text>
</comment>
<sequence length="189" mass="21370">MTIKSDKWIRRMAESHKMIEPFAPDQVRVSEDGRKIVSYGTSSYGYDIRCADEFKIFTNINSTIVDPKNFDEKSFVDFKGDVCIIPPNSFALARTVEYFRIPRSVLTVCLGKSTYARCGIIVNVTPFEPEWEGHVTLEFSNTTPLPAKIYANEGVAQVLFFESDEICETSYADRGGKYQGQHGVTLPRT</sequence>
<protein>
    <recommendedName>
        <fullName evidence="1">dCTP deaminase</fullName>
        <ecNumber evidence="1">3.5.4.13</ecNumber>
    </recommendedName>
    <alternativeName>
        <fullName evidence="1">Deoxycytidine triphosphate deaminase</fullName>
    </alternativeName>
</protein>
<proteinExistence type="inferred from homology"/>